<protein>
    <recommendedName>
        <fullName evidence="1">Signal recognition particle 54 kDa protein</fullName>
        <shortName evidence="1">SRP54</shortName>
        <ecNumber evidence="1">3.6.5.4</ecNumber>
    </recommendedName>
</protein>
<name>SRP54_THEON</name>
<comment type="function">
    <text evidence="1">Involved in targeting and insertion of nascent membrane proteins into the cytoplasmic membrane. Binds to the hydrophobic signal sequence of the ribosome-nascent chain (RNC) as it emerges from the ribosomes. The SRP-RNC complex is then targeted to the cytoplasmic membrane where it interacts with the SRP receptor FtsY.</text>
</comment>
<comment type="catalytic activity">
    <reaction evidence="1">
        <text>GTP + H2O = GDP + phosphate + H(+)</text>
        <dbReference type="Rhea" id="RHEA:19669"/>
        <dbReference type="ChEBI" id="CHEBI:15377"/>
        <dbReference type="ChEBI" id="CHEBI:15378"/>
        <dbReference type="ChEBI" id="CHEBI:37565"/>
        <dbReference type="ChEBI" id="CHEBI:43474"/>
        <dbReference type="ChEBI" id="CHEBI:58189"/>
        <dbReference type="EC" id="3.6.5.4"/>
    </reaction>
</comment>
<comment type="subunit">
    <text evidence="1">Part of the signal recognition particle protein translocation system, which is composed of SRP and FtsY. Archaeal SRP consists of a 7S RNA molecule of 300 nucleotides and two protein subunits: SRP54 and SRP19.</text>
</comment>
<comment type="subcellular location">
    <subcellularLocation>
        <location evidence="1">Cytoplasm</location>
    </subcellularLocation>
    <text evidence="1">The SRP-RNC complex is targeted to the cytoplasmic membrane.</text>
</comment>
<comment type="domain">
    <text evidence="1">Composed of three domains: the N-terminal N domain, which is responsible for interactions with the ribosome, the central G domain, which binds GTP, and the C-terminal M domain, which binds the RNA and the signal sequence of the RNC.</text>
</comment>
<comment type="similarity">
    <text evidence="1">Belongs to the GTP-binding SRP family. SRP54 subfamily.</text>
</comment>
<accession>B6YSS1</accession>
<sequence>MALEKLGKALNNALRKLARSSTVDEATIKEVVRDIQRALIQADVNVRLVLDLTKRIEKRALEEEPPTGVSKKEHIIKIVYEELTKFLGTEAKPIEIKEKPTVLLTVGIQGSGKTTSIAKLARYFQKRGYKVGLVCSDTWRPGAYQQLKQLVEPFGIEVFGDPEEKDAIKLAKEGVEHFREKGVDIIIVDSAGRHKEEKSLIEEMKQISAAIKPHEVILVIDGTIGQQAYNQALAFKEATPIGSIIVTKLDGSAKGGGALSAVAATGAPIKFIGVGERIDDLEPFDPKRFVSRLLGLGDIQGLLEKFEELQKQQEFREEDLEKFLKGKFNLKDMYAQLEAMQKMGPLKQILQMIPGMGYSLPDDAVRVGEERLKKFKVIMDSMTEEELEHPEIINYSRIKRIARGSGTSIQEVRELLHQYNQMKKMFKSMDKRKLSKMARKFNLGGFGL</sequence>
<feature type="chain" id="PRO_1000115621" description="Signal recognition particle 54 kDa protein">
    <location>
        <begin position="1"/>
        <end position="448"/>
    </location>
</feature>
<feature type="binding site" evidence="1">
    <location>
        <begin position="107"/>
        <end position="114"/>
    </location>
    <ligand>
        <name>GTP</name>
        <dbReference type="ChEBI" id="CHEBI:37565"/>
    </ligand>
</feature>
<feature type="binding site" evidence="1">
    <location>
        <begin position="189"/>
        <end position="193"/>
    </location>
    <ligand>
        <name>GTP</name>
        <dbReference type="ChEBI" id="CHEBI:37565"/>
    </ligand>
</feature>
<feature type="binding site" evidence="1">
    <location>
        <begin position="247"/>
        <end position="250"/>
    </location>
    <ligand>
        <name>GTP</name>
        <dbReference type="ChEBI" id="CHEBI:37565"/>
    </ligand>
</feature>
<keyword id="KW-0963">Cytoplasm</keyword>
<keyword id="KW-0342">GTP-binding</keyword>
<keyword id="KW-0378">Hydrolase</keyword>
<keyword id="KW-0547">Nucleotide-binding</keyword>
<keyword id="KW-0687">Ribonucleoprotein</keyword>
<keyword id="KW-0694">RNA-binding</keyword>
<keyword id="KW-0733">Signal recognition particle</keyword>
<organism>
    <name type="scientific">Thermococcus onnurineus (strain NA1)</name>
    <dbReference type="NCBI Taxonomy" id="523850"/>
    <lineage>
        <taxon>Archaea</taxon>
        <taxon>Methanobacteriati</taxon>
        <taxon>Methanobacteriota</taxon>
        <taxon>Thermococci</taxon>
        <taxon>Thermococcales</taxon>
        <taxon>Thermococcaceae</taxon>
        <taxon>Thermococcus</taxon>
    </lineage>
</organism>
<proteinExistence type="inferred from homology"/>
<gene>
    <name evidence="1" type="primary">srp54</name>
    <name type="ordered locus">TON_0123</name>
</gene>
<reference key="1">
    <citation type="journal article" date="2008" name="J. Bacteriol.">
        <title>The complete genome sequence of Thermococcus onnurineus NA1 reveals a mixed heterotrophic and carboxydotrophic metabolism.</title>
        <authorList>
            <person name="Lee H.S."/>
            <person name="Kang S.G."/>
            <person name="Bae S.S."/>
            <person name="Lim J.K."/>
            <person name="Cho Y."/>
            <person name="Kim Y.J."/>
            <person name="Jeon J.H."/>
            <person name="Cha S.-S."/>
            <person name="Kwon K.K."/>
            <person name="Kim H.-T."/>
            <person name="Park C.-J."/>
            <person name="Lee H.-W."/>
            <person name="Kim S.I."/>
            <person name="Chun J."/>
            <person name="Colwell R.R."/>
            <person name="Kim S.-J."/>
            <person name="Lee J.-H."/>
        </authorList>
    </citation>
    <scope>NUCLEOTIDE SEQUENCE [LARGE SCALE GENOMIC DNA]</scope>
    <source>
        <strain>NA1</strain>
    </source>
</reference>
<evidence type="ECO:0000255" key="1">
    <source>
        <dbReference type="HAMAP-Rule" id="MF_00306"/>
    </source>
</evidence>
<dbReference type="EC" id="3.6.5.4" evidence="1"/>
<dbReference type="EMBL" id="CP000855">
    <property type="protein sequence ID" value="ACJ15608.1"/>
    <property type="molecule type" value="Genomic_DNA"/>
</dbReference>
<dbReference type="RefSeq" id="WP_012571081.1">
    <property type="nucleotide sequence ID" value="NC_011529.1"/>
</dbReference>
<dbReference type="SMR" id="B6YSS1"/>
<dbReference type="STRING" id="523850.TON_0123"/>
<dbReference type="GeneID" id="7017775"/>
<dbReference type="KEGG" id="ton:TON_0123"/>
<dbReference type="PATRIC" id="fig|523850.10.peg.123"/>
<dbReference type="eggNOG" id="arCOG01228">
    <property type="taxonomic scope" value="Archaea"/>
</dbReference>
<dbReference type="HOGENOM" id="CLU_009301_6_0_2"/>
<dbReference type="OrthoDB" id="52849at2157"/>
<dbReference type="Proteomes" id="UP000002727">
    <property type="component" value="Chromosome"/>
</dbReference>
<dbReference type="GO" id="GO:0048500">
    <property type="term" value="C:signal recognition particle"/>
    <property type="evidence" value="ECO:0007669"/>
    <property type="project" value="UniProtKB-UniRule"/>
</dbReference>
<dbReference type="GO" id="GO:0008312">
    <property type="term" value="F:7S RNA binding"/>
    <property type="evidence" value="ECO:0007669"/>
    <property type="project" value="UniProtKB-UniRule"/>
</dbReference>
<dbReference type="GO" id="GO:0016887">
    <property type="term" value="F:ATP hydrolysis activity"/>
    <property type="evidence" value="ECO:0007669"/>
    <property type="project" value="InterPro"/>
</dbReference>
<dbReference type="GO" id="GO:0005525">
    <property type="term" value="F:GTP binding"/>
    <property type="evidence" value="ECO:0007669"/>
    <property type="project" value="UniProtKB-UniRule"/>
</dbReference>
<dbReference type="GO" id="GO:0003924">
    <property type="term" value="F:GTPase activity"/>
    <property type="evidence" value="ECO:0007669"/>
    <property type="project" value="UniProtKB-UniRule"/>
</dbReference>
<dbReference type="GO" id="GO:0006614">
    <property type="term" value="P:SRP-dependent cotranslational protein targeting to membrane"/>
    <property type="evidence" value="ECO:0007669"/>
    <property type="project" value="InterPro"/>
</dbReference>
<dbReference type="CDD" id="cd17875">
    <property type="entry name" value="SRP54_G"/>
    <property type="match status" value="1"/>
</dbReference>
<dbReference type="FunFam" id="3.40.50.300:FF:000022">
    <property type="entry name" value="Signal recognition particle 54 kDa subunit"/>
    <property type="match status" value="1"/>
</dbReference>
<dbReference type="Gene3D" id="3.40.50.300">
    <property type="entry name" value="P-loop containing nucleotide triphosphate hydrolases"/>
    <property type="match status" value="1"/>
</dbReference>
<dbReference type="Gene3D" id="1.20.120.140">
    <property type="entry name" value="Signal recognition particle SRP54, nucleotide-binding domain"/>
    <property type="match status" value="1"/>
</dbReference>
<dbReference type="Gene3D" id="1.10.260.30">
    <property type="entry name" value="Signal recognition particle, SRP54 subunit, M-domain"/>
    <property type="match status" value="1"/>
</dbReference>
<dbReference type="HAMAP" id="MF_00306">
    <property type="entry name" value="SRP54"/>
    <property type="match status" value="1"/>
</dbReference>
<dbReference type="InterPro" id="IPR003593">
    <property type="entry name" value="AAA+_ATPase"/>
</dbReference>
<dbReference type="InterPro" id="IPR027417">
    <property type="entry name" value="P-loop_NTPase"/>
</dbReference>
<dbReference type="InterPro" id="IPR036891">
    <property type="entry name" value="Signal_recog_part_SRP54_M_sf"/>
</dbReference>
<dbReference type="InterPro" id="IPR013822">
    <property type="entry name" value="Signal_recog_particl_SRP54_hlx"/>
</dbReference>
<dbReference type="InterPro" id="IPR004125">
    <property type="entry name" value="Signal_recog_particle_SRP54_M"/>
</dbReference>
<dbReference type="InterPro" id="IPR036225">
    <property type="entry name" value="SRP/SRP_N"/>
</dbReference>
<dbReference type="InterPro" id="IPR022941">
    <property type="entry name" value="SRP54"/>
</dbReference>
<dbReference type="InterPro" id="IPR000897">
    <property type="entry name" value="SRP54_GTPase_dom"/>
</dbReference>
<dbReference type="InterPro" id="IPR042101">
    <property type="entry name" value="SRP54_N_sf"/>
</dbReference>
<dbReference type="PANTHER" id="PTHR11564">
    <property type="entry name" value="SIGNAL RECOGNITION PARTICLE 54K PROTEIN SRP54"/>
    <property type="match status" value="1"/>
</dbReference>
<dbReference type="PANTHER" id="PTHR11564:SF5">
    <property type="entry name" value="SIGNAL RECOGNITION PARTICLE SUBUNIT SRP54"/>
    <property type="match status" value="1"/>
</dbReference>
<dbReference type="Pfam" id="PF00448">
    <property type="entry name" value="SRP54"/>
    <property type="match status" value="1"/>
</dbReference>
<dbReference type="Pfam" id="PF02881">
    <property type="entry name" value="SRP54_N"/>
    <property type="match status" value="1"/>
</dbReference>
<dbReference type="Pfam" id="PF02978">
    <property type="entry name" value="SRP_SPB"/>
    <property type="match status" value="1"/>
</dbReference>
<dbReference type="SMART" id="SM00382">
    <property type="entry name" value="AAA"/>
    <property type="match status" value="1"/>
</dbReference>
<dbReference type="SMART" id="SM00962">
    <property type="entry name" value="SRP54"/>
    <property type="match status" value="1"/>
</dbReference>
<dbReference type="SMART" id="SM00963">
    <property type="entry name" value="SRP54_N"/>
    <property type="match status" value="1"/>
</dbReference>
<dbReference type="SUPFAM" id="SSF47364">
    <property type="entry name" value="Domain of the SRP/SRP receptor G-proteins"/>
    <property type="match status" value="1"/>
</dbReference>
<dbReference type="SUPFAM" id="SSF52540">
    <property type="entry name" value="P-loop containing nucleoside triphosphate hydrolases"/>
    <property type="match status" value="1"/>
</dbReference>
<dbReference type="SUPFAM" id="SSF47446">
    <property type="entry name" value="Signal peptide-binding domain"/>
    <property type="match status" value="1"/>
</dbReference>
<dbReference type="PROSITE" id="PS00300">
    <property type="entry name" value="SRP54"/>
    <property type="match status" value="1"/>
</dbReference>